<name>RTC4_YEAS8</name>
<feature type="chain" id="PRO_0000408802" description="Restriction of telomere capping protein 4">
    <location>
        <begin position="1"/>
        <end position="401"/>
    </location>
</feature>
<feature type="region of interest" description="Disordered" evidence="3">
    <location>
        <begin position="35"/>
        <end position="59"/>
    </location>
</feature>
<feature type="compositionally biased region" description="Basic and acidic residues" evidence="3">
    <location>
        <begin position="35"/>
        <end position="48"/>
    </location>
</feature>
<feature type="modified residue" description="Phosphoserine" evidence="2">
    <location>
        <position position="23"/>
    </location>
</feature>
<organism>
    <name type="scientific">Saccharomyces cerevisiae (strain Lalvin EC1118 / Prise de mousse)</name>
    <name type="common">Baker's yeast</name>
    <dbReference type="NCBI Taxonomy" id="643680"/>
    <lineage>
        <taxon>Eukaryota</taxon>
        <taxon>Fungi</taxon>
        <taxon>Dikarya</taxon>
        <taxon>Ascomycota</taxon>
        <taxon>Saccharomycotina</taxon>
        <taxon>Saccharomycetes</taxon>
        <taxon>Saccharomycetales</taxon>
        <taxon>Saccharomycetaceae</taxon>
        <taxon>Saccharomyces</taxon>
    </lineage>
</organism>
<gene>
    <name type="primary">RTC4</name>
    <name type="ORF">EC1118_1N9_0870g</name>
</gene>
<accession>C8ZFY3</accession>
<comment type="function">
    <text evidence="1">May be involved in a process influencing telomere capping.</text>
</comment>
<comment type="subcellular location">
    <subcellularLocation>
        <location evidence="1">Cytoplasm</location>
    </subcellularLocation>
    <subcellularLocation>
        <location evidence="1">Nucleus</location>
    </subcellularLocation>
</comment>
<comment type="similarity">
    <text evidence="4">Belongs to the RTC4 family.</text>
</comment>
<sequence length="401" mass="46184">MVGPGLGINRVRRKGVYSTKKGSGDNLLLMKRQGKHDIHDRESDDLSGHDAFSPSKKRGKIDSITEDEIEVKKLSTVATFDKLSRSFPNSEVQAAKNAALRGKEKEEEKVVSIPLIQNLKNEDIESIKCRNNNLLDGKKLLLEAELSAVEDNQIFSSSFPEDKKLSLQSCLSSKEQIIKKLQVREEYMSKFKLPPMLFSDELLTEVEPFMPIVMDILEGKISSAYYFEAKNAFKNSQKAYLSVDEFRKLNLNKFTAGFYGLKRQLRVGEEIAKRYKRALTHNQPATLKWWGITDFCNYVLAPETLTSFCIYQLNLSNKSCSSKTPNKHPKQQLNEKEYYYDPELRMLAYDLLEDTVEYGIIVADSDPIEQWEAAIEEDRLRELKLDVHNYSSRRWRLDTHD</sequence>
<keyword id="KW-0963">Cytoplasm</keyword>
<keyword id="KW-0539">Nucleus</keyword>
<keyword id="KW-0597">Phosphoprotein</keyword>
<dbReference type="EMBL" id="FN393086">
    <property type="protein sequence ID" value="CAY82356.1"/>
    <property type="molecule type" value="Genomic_DNA"/>
</dbReference>
<dbReference type="HOGENOM" id="CLU_049922_0_0_1"/>
<dbReference type="OrthoDB" id="42073at4893"/>
<dbReference type="Proteomes" id="UP000000286">
    <property type="component" value="Chromosome XIV, Scaffold EC1118_1N9"/>
</dbReference>
<dbReference type="GO" id="GO:0005737">
    <property type="term" value="C:cytoplasm"/>
    <property type="evidence" value="ECO:0007669"/>
    <property type="project" value="UniProtKB-SubCell"/>
</dbReference>
<dbReference type="GO" id="GO:0005634">
    <property type="term" value="C:nucleus"/>
    <property type="evidence" value="ECO:0007669"/>
    <property type="project" value="UniProtKB-SubCell"/>
</dbReference>
<dbReference type="InterPro" id="IPR039024">
    <property type="entry name" value="RTC4"/>
</dbReference>
<dbReference type="InterPro" id="IPR028094">
    <property type="entry name" value="RTC4_C"/>
</dbReference>
<dbReference type="PANTHER" id="PTHR41391">
    <property type="entry name" value="RESTRICTION OF TELOMERE CAPPING PROTEIN 4"/>
    <property type="match status" value="1"/>
</dbReference>
<dbReference type="PANTHER" id="PTHR41391:SF1">
    <property type="entry name" value="RESTRICTION OF TELOMERE CAPPING PROTEIN 4"/>
    <property type="match status" value="1"/>
</dbReference>
<dbReference type="Pfam" id="PF14474">
    <property type="entry name" value="RTC4"/>
    <property type="match status" value="1"/>
</dbReference>
<dbReference type="SMART" id="SM01312">
    <property type="entry name" value="RTC4"/>
    <property type="match status" value="1"/>
</dbReference>
<protein>
    <recommendedName>
        <fullName>Restriction of telomere capping protein 4</fullName>
    </recommendedName>
</protein>
<reference key="1">
    <citation type="journal article" date="2009" name="Proc. Natl. Acad. Sci. U.S.A.">
        <title>Eukaryote-to-eukaryote gene transfer events revealed by the genome sequence of the wine yeast Saccharomyces cerevisiae EC1118.</title>
        <authorList>
            <person name="Novo M."/>
            <person name="Bigey F."/>
            <person name="Beyne E."/>
            <person name="Galeote V."/>
            <person name="Gavory F."/>
            <person name="Mallet S."/>
            <person name="Cambon B."/>
            <person name="Legras J.-L."/>
            <person name="Wincker P."/>
            <person name="Casaregola S."/>
            <person name="Dequin S."/>
        </authorList>
    </citation>
    <scope>NUCLEOTIDE SEQUENCE [LARGE SCALE GENOMIC DNA]</scope>
    <source>
        <strain>Lalvin EC1118 / Prise de mousse</strain>
    </source>
</reference>
<proteinExistence type="inferred from homology"/>
<evidence type="ECO:0000250" key="1"/>
<evidence type="ECO:0000250" key="2">
    <source>
        <dbReference type="UniProtKB" id="P53850"/>
    </source>
</evidence>
<evidence type="ECO:0000256" key="3">
    <source>
        <dbReference type="SAM" id="MobiDB-lite"/>
    </source>
</evidence>
<evidence type="ECO:0000305" key="4"/>